<dbReference type="EC" id="6.3.5.3" evidence="1"/>
<dbReference type="EMBL" id="CP000872">
    <property type="protein sequence ID" value="ABX61917.1"/>
    <property type="molecule type" value="Genomic_DNA"/>
</dbReference>
<dbReference type="RefSeq" id="WP_004688249.1">
    <property type="nucleotide sequence ID" value="NC_010103.1"/>
</dbReference>
<dbReference type="SMR" id="A9MAL4"/>
<dbReference type="GeneID" id="97533862"/>
<dbReference type="KEGG" id="bcs:BCAN_A0852"/>
<dbReference type="HOGENOM" id="CLU_003100_0_1_5"/>
<dbReference type="UniPathway" id="UPA00074">
    <property type="reaction ID" value="UER00128"/>
</dbReference>
<dbReference type="PRO" id="PR:A9MAL4"/>
<dbReference type="Proteomes" id="UP000001385">
    <property type="component" value="Chromosome I"/>
</dbReference>
<dbReference type="GO" id="GO:0005737">
    <property type="term" value="C:cytoplasm"/>
    <property type="evidence" value="ECO:0007669"/>
    <property type="project" value="UniProtKB-SubCell"/>
</dbReference>
<dbReference type="GO" id="GO:0005524">
    <property type="term" value="F:ATP binding"/>
    <property type="evidence" value="ECO:0007669"/>
    <property type="project" value="UniProtKB-UniRule"/>
</dbReference>
<dbReference type="GO" id="GO:0000287">
    <property type="term" value="F:magnesium ion binding"/>
    <property type="evidence" value="ECO:0007669"/>
    <property type="project" value="UniProtKB-UniRule"/>
</dbReference>
<dbReference type="GO" id="GO:0004642">
    <property type="term" value="F:phosphoribosylformylglycinamidine synthase activity"/>
    <property type="evidence" value="ECO:0007669"/>
    <property type="project" value="UniProtKB-UniRule"/>
</dbReference>
<dbReference type="GO" id="GO:0006189">
    <property type="term" value="P:'de novo' IMP biosynthetic process"/>
    <property type="evidence" value="ECO:0007669"/>
    <property type="project" value="UniProtKB-UniRule"/>
</dbReference>
<dbReference type="CDD" id="cd02203">
    <property type="entry name" value="PurL_repeat1"/>
    <property type="match status" value="1"/>
</dbReference>
<dbReference type="CDD" id="cd02204">
    <property type="entry name" value="PurL_repeat2"/>
    <property type="match status" value="1"/>
</dbReference>
<dbReference type="FunFam" id="3.30.1330.10:FF:000004">
    <property type="entry name" value="Phosphoribosylformylglycinamidine synthase subunit PurL"/>
    <property type="match status" value="1"/>
</dbReference>
<dbReference type="Gene3D" id="3.90.650.10">
    <property type="entry name" value="PurM-like C-terminal domain"/>
    <property type="match status" value="2"/>
</dbReference>
<dbReference type="Gene3D" id="3.30.1330.10">
    <property type="entry name" value="PurM-like, N-terminal domain"/>
    <property type="match status" value="2"/>
</dbReference>
<dbReference type="HAMAP" id="MF_00420">
    <property type="entry name" value="PurL_2"/>
    <property type="match status" value="1"/>
</dbReference>
<dbReference type="InterPro" id="IPR010074">
    <property type="entry name" value="PRibForGlyAmidine_synth_PurL"/>
</dbReference>
<dbReference type="InterPro" id="IPR041609">
    <property type="entry name" value="PurL_linker"/>
</dbReference>
<dbReference type="InterPro" id="IPR010918">
    <property type="entry name" value="PurM-like_C_dom"/>
</dbReference>
<dbReference type="InterPro" id="IPR036676">
    <property type="entry name" value="PurM-like_C_sf"/>
</dbReference>
<dbReference type="InterPro" id="IPR016188">
    <property type="entry name" value="PurM-like_N"/>
</dbReference>
<dbReference type="InterPro" id="IPR036921">
    <property type="entry name" value="PurM-like_N_sf"/>
</dbReference>
<dbReference type="NCBIfam" id="TIGR01736">
    <property type="entry name" value="FGAM_synth_II"/>
    <property type="match status" value="1"/>
</dbReference>
<dbReference type="NCBIfam" id="NF002290">
    <property type="entry name" value="PRK01213.1"/>
    <property type="match status" value="1"/>
</dbReference>
<dbReference type="PANTHER" id="PTHR43555">
    <property type="entry name" value="PHOSPHORIBOSYLFORMYLGLYCINAMIDINE SYNTHASE SUBUNIT PURL"/>
    <property type="match status" value="1"/>
</dbReference>
<dbReference type="PANTHER" id="PTHR43555:SF1">
    <property type="entry name" value="PHOSPHORIBOSYLFORMYLGLYCINAMIDINE SYNTHASE SUBUNIT PURL"/>
    <property type="match status" value="1"/>
</dbReference>
<dbReference type="Pfam" id="PF00586">
    <property type="entry name" value="AIRS"/>
    <property type="match status" value="2"/>
</dbReference>
<dbReference type="Pfam" id="PF02769">
    <property type="entry name" value="AIRS_C"/>
    <property type="match status" value="2"/>
</dbReference>
<dbReference type="Pfam" id="PF18072">
    <property type="entry name" value="FGAR-AT_linker"/>
    <property type="match status" value="1"/>
</dbReference>
<dbReference type="PIRSF" id="PIRSF001587">
    <property type="entry name" value="FGAM_synthase_II"/>
    <property type="match status" value="1"/>
</dbReference>
<dbReference type="SUPFAM" id="SSF56042">
    <property type="entry name" value="PurM C-terminal domain-like"/>
    <property type="match status" value="2"/>
</dbReference>
<dbReference type="SUPFAM" id="SSF55326">
    <property type="entry name" value="PurM N-terminal domain-like"/>
    <property type="match status" value="2"/>
</dbReference>
<accession>A9MAL4</accession>
<protein>
    <recommendedName>
        <fullName evidence="1">Phosphoribosylformylglycinamidine synthase subunit PurL</fullName>
        <shortName evidence="1">FGAM synthase</shortName>
        <ecNumber evidence="1">6.3.5.3</ecNumber>
    </recommendedName>
    <alternativeName>
        <fullName evidence="1">Formylglycinamide ribonucleotide amidotransferase subunit II</fullName>
        <shortName evidence="1">FGAR amidotransferase II</shortName>
        <shortName evidence="1">FGAR-AT II</shortName>
    </alternativeName>
    <alternativeName>
        <fullName evidence="1">Glutamine amidotransferase PurL</fullName>
    </alternativeName>
    <alternativeName>
        <fullName evidence="1">Phosphoribosylformylglycinamidine synthase subunit II</fullName>
    </alternativeName>
</protein>
<proteinExistence type="inferred from homology"/>
<keyword id="KW-0067">ATP-binding</keyword>
<keyword id="KW-0963">Cytoplasm</keyword>
<keyword id="KW-0436">Ligase</keyword>
<keyword id="KW-0460">Magnesium</keyword>
<keyword id="KW-0479">Metal-binding</keyword>
<keyword id="KW-0547">Nucleotide-binding</keyword>
<keyword id="KW-0658">Purine biosynthesis</keyword>
<keyword id="KW-1185">Reference proteome</keyword>
<sequence>MTISNTRDITPELIEAHGLKPDEYQRILELIGREPTFTELGIFSAMWNEHCSYKSSKKWLRTLPTSGPRVIQGPGENAGVVDIGDGDCVVFKMESHNHPSYIEPYQGAATGVGGILRDVFTMGARPVAAMNALRFGEPDHPKTRHLVSGVVSGVGGYGNAFGVPTVGGEVNFDKRYNGNILVNAFAAGLARHDGIFLSEAKGVGLPVVYLGAKTGRDGVGGATMASAEFDESIEEKRPTVQVGDPFTEKCLLEACLELMASGAVIAIQDMGAAGLTCSAVEMGAKGDLGIELILDHVPVREENMTAYEMMLSESQERMLMVLKPEKEAEAQAIFRKWGLDFAIVGKTTDDLRFRVIHQGEEVANLPIKDLGDEAPEYDRPWMEPGKHAPLPASNVPQVEDYSAALLKLIGSPDLSSRRWVYEQYDTLIQGNSLQVPGGDAGVIRVEGHETKALAFSSDVTPRYCEADPFEGGKQAVAECWRNITATGAEPLASTDNLNFGNPEKPEIMGQLVKAIEGIGEACRALDFPIVSGNVSLYNETNGQAILPTPTIAGVGLLPDWSQMAKIGGMQDGDTLVLLGGDGTHLGQSVYLRDLFDRADGPAPFVDLALEKRNGEFVRSAIRNGQVTACHDLSDGGLAIAVAEMAIKSGKGATLDAGDGLPHALLFGEDQARYVISATPEMAKLIALNAEGAGVPFRILGTVGGDRLKISKNVDVSVADLTQAYEGWFPNFMNGELTGNN</sequence>
<gene>
    <name evidence="1" type="primary">purL</name>
    <name type="ordered locus">BCAN_A0852</name>
</gene>
<evidence type="ECO:0000255" key="1">
    <source>
        <dbReference type="HAMAP-Rule" id="MF_00420"/>
    </source>
</evidence>
<feature type="chain" id="PRO_1000080549" description="Phosphoribosylformylglycinamidine synthase subunit PurL">
    <location>
        <begin position="1"/>
        <end position="740"/>
    </location>
</feature>
<feature type="active site" evidence="1">
    <location>
        <position position="50"/>
    </location>
</feature>
<feature type="active site" description="Proton acceptor" evidence="1">
    <location>
        <position position="96"/>
    </location>
</feature>
<feature type="binding site" evidence="1">
    <location>
        <position position="53"/>
    </location>
    <ligand>
        <name>ATP</name>
        <dbReference type="ChEBI" id="CHEBI:30616"/>
    </ligand>
</feature>
<feature type="binding site" evidence="1">
    <location>
        <position position="92"/>
    </location>
    <ligand>
        <name>ATP</name>
        <dbReference type="ChEBI" id="CHEBI:30616"/>
    </ligand>
</feature>
<feature type="binding site" evidence="1">
    <location>
        <position position="94"/>
    </location>
    <ligand>
        <name>Mg(2+)</name>
        <dbReference type="ChEBI" id="CHEBI:18420"/>
        <label>1</label>
    </ligand>
</feature>
<feature type="binding site" evidence="1">
    <location>
        <begin position="95"/>
        <end position="98"/>
    </location>
    <ligand>
        <name>substrate</name>
    </ligand>
</feature>
<feature type="binding site" evidence="1">
    <location>
        <position position="117"/>
    </location>
    <ligand>
        <name>substrate</name>
    </ligand>
</feature>
<feature type="binding site" evidence="1">
    <location>
        <position position="118"/>
    </location>
    <ligand>
        <name>Mg(2+)</name>
        <dbReference type="ChEBI" id="CHEBI:18420"/>
        <label>2</label>
    </ligand>
</feature>
<feature type="binding site" evidence="1">
    <location>
        <position position="241"/>
    </location>
    <ligand>
        <name>substrate</name>
    </ligand>
</feature>
<feature type="binding site" evidence="1">
    <location>
        <position position="269"/>
    </location>
    <ligand>
        <name>Mg(2+)</name>
        <dbReference type="ChEBI" id="CHEBI:18420"/>
        <label>2</label>
    </ligand>
</feature>
<feature type="binding site" evidence="1">
    <location>
        <begin position="313"/>
        <end position="315"/>
    </location>
    <ligand>
        <name>substrate</name>
    </ligand>
</feature>
<feature type="binding site" evidence="1">
    <location>
        <position position="495"/>
    </location>
    <ligand>
        <name>ATP</name>
        <dbReference type="ChEBI" id="CHEBI:30616"/>
    </ligand>
</feature>
<feature type="binding site" evidence="1">
    <location>
        <position position="532"/>
    </location>
    <ligand>
        <name>ATP</name>
        <dbReference type="ChEBI" id="CHEBI:30616"/>
    </ligand>
</feature>
<feature type="binding site" evidence="1">
    <location>
        <position position="533"/>
    </location>
    <ligand>
        <name>Mg(2+)</name>
        <dbReference type="ChEBI" id="CHEBI:18420"/>
        <label>1</label>
    </ligand>
</feature>
<feature type="binding site" evidence="1">
    <location>
        <position position="535"/>
    </location>
    <ligand>
        <name>substrate</name>
    </ligand>
</feature>
<organism>
    <name type="scientific">Brucella canis (strain ATCC 23365 / NCTC 10854 / RM-666)</name>
    <dbReference type="NCBI Taxonomy" id="483179"/>
    <lineage>
        <taxon>Bacteria</taxon>
        <taxon>Pseudomonadati</taxon>
        <taxon>Pseudomonadota</taxon>
        <taxon>Alphaproteobacteria</taxon>
        <taxon>Hyphomicrobiales</taxon>
        <taxon>Brucellaceae</taxon>
        <taxon>Brucella/Ochrobactrum group</taxon>
        <taxon>Brucella</taxon>
    </lineage>
</organism>
<name>PURL_BRUC2</name>
<reference key="1">
    <citation type="submission" date="2007-10" db="EMBL/GenBank/DDBJ databases">
        <title>Brucella canis ATCC 23365 whole genome shotgun sequencing project.</title>
        <authorList>
            <person name="Setubal J.C."/>
            <person name="Bowns C."/>
            <person name="Boyle S."/>
            <person name="Crasta O.R."/>
            <person name="Czar M.J."/>
            <person name="Dharmanolla C."/>
            <person name="Gillespie J.J."/>
            <person name="Kenyon R.W."/>
            <person name="Lu J."/>
            <person name="Mane S."/>
            <person name="Mohapatra S."/>
            <person name="Nagrani S."/>
            <person name="Purkayastha A."/>
            <person name="Rajasimha H.K."/>
            <person name="Shallom J.M."/>
            <person name="Shallom S."/>
            <person name="Shukla M."/>
            <person name="Snyder E.E."/>
            <person name="Sobral B.W."/>
            <person name="Wattam A.R."/>
            <person name="Will R."/>
            <person name="Williams K."/>
            <person name="Yoo H."/>
            <person name="Bruce D."/>
            <person name="Detter C."/>
            <person name="Munk C."/>
            <person name="Brettin T.S."/>
        </authorList>
    </citation>
    <scope>NUCLEOTIDE SEQUENCE [LARGE SCALE GENOMIC DNA]</scope>
    <source>
        <strain>ATCC 23365 / NCTC 10854 / RM-666</strain>
    </source>
</reference>
<comment type="function">
    <text evidence="1">Part of the phosphoribosylformylglycinamidine synthase complex involved in the purines biosynthetic pathway. Catalyzes the ATP-dependent conversion of formylglycinamide ribonucleotide (FGAR) and glutamine to yield formylglycinamidine ribonucleotide (FGAM) and glutamate. The FGAM synthase complex is composed of three subunits. PurQ produces an ammonia molecule by converting glutamine to glutamate. PurL transfers the ammonia molecule to FGAR to form FGAM in an ATP-dependent manner. PurS interacts with PurQ and PurL and is thought to assist in the transfer of the ammonia molecule from PurQ to PurL.</text>
</comment>
<comment type="catalytic activity">
    <reaction evidence="1">
        <text>N(2)-formyl-N(1)-(5-phospho-beta-D-ribosyl)glycinamide + L-glutamine + ATP + H2O = 2-formamido-N(1)-(5-O-phospho-beta-D-ribosyl)acetamidine + L-glutamate + ADP + phosphate + H(+)</text>
        <dbReference type="Rhea" id="RHEA:17129"/>
        <dbReference type="ChEBI" id="CHEBI:15377"/>
        <dbReference type="ChEBI" id="CHEBI:15378"/>
        <dbReference type="ChEBI" id="CHEBI:29985"/>
        <dbReference type="ChEBI" id="CHEBI:30616"/>
        <dbReference type="ChEBI" id="CHEBI:43474"/>
        <dbReference type="ChEBI" id="CHEBI:58359"/>
        <dbReference type="ChEBI" id="CHEBI:147286"/>
        <dbReference type="ChEBI" id="CHEBI:147287"/>
        <dbReference type="ChEBI" id="CHEBI:456216"/>
        <dbReference type="EC" id="6.3.5.3"/>
    </reaction>
</comment>
<comment type="pathway">
    <text evidence="1">Purine metabolism; IMP biosynthesis via de novo pathway; 5-amino-1-(5-phospho-D-ribosyl)imidazole from N(2)-formyl-N(1)-(5-phospho-D-ribosyl)glycinamide: step 1/2.</text>
</comment>
<comment type="subunit">
    <text evidence="1">Monomer. Part of the FGAM synthase complex composed of 1 PurL, 1 PurQ and 2 PurS subunits.</text>
</comment>
<comment type="subcellular location">
    <subcellularLocation>
        <location evidence="1">Cytoplasm</location>
    </subcellularLocation>
</comment>
<comment type="similarity">
    <text evidence="1">Belongs to the FGAMS family.</text>
</comment>